<organism>
    <name type="scientific">Bos taurus</name>
    <name type="common">Bovine</name>
    <dbReference type="NCBI Taxonomy" id="9913"/>
    <lineage>
        <taxon>Eukaryota</taxon>
        <taxon>Metazoa</taxon>
        <taxon>Chordata</taxon>
        <taxon>Craniata</taxon>
        <taxon>Vertebrata</taxon>
        <taxon>Euteleostomi</taxon>
        <taxon>Mammalia</taxon>
        <taxon>Eutheria</taxon>
        <taxon>Laurasiatheria</taxon>
        <taxon>Artiodactyla</taxon>
        <taxon>Ruminantia</taxon>
        <taxon>Pecora</taxon>
        <taxon>Bovidae</taxon>
        <taxon>Bovinae</taxon>
        <taxon>Bos</taxon>
    </lineage>
</organism>
<proteinExistence type="evidence at transcript level"/>
<protein>
    <recommendedName>
        <fullName>KN motif and ankyrin repeat domain-containing protein 2</fullName>
    </recommendedName>
    <alternativeName>
        <fullName>Ankyrin repeat domain-containing protein 25</fullName>
    </alternativeName>
</protein>
<keyword id="KW-0040">ANK repeat</keyword>
<keyword id="KW-0053">Apoptosis</keyword>
<keyword id="KW-0175">Coiled coil</keyword>
<keyword id="KW-0963">Cytoplasm</keyword>
<keyword id="KW-0488">Methylation</keyword>
<keyword id="KW-0496">Mitochondrion</keyword>
<keyword id="KW-0597">Phosphoprotein</keyword>
<keyword id="KW-1185">Reference proteome</keyword>
<keyword id="KW-0677">Repeat</keyword>
<keyword id="KW-0804">Transcription</keyword>
<keyword id="KW-0805">Transcription regulation</keyword>
<sequence>MAQVLHVSAPFPGTPGPASPPAFPSKEPDVPYSVETPYGYRLDLDFLKYVDDIEKGHTLRRVAVQRRPRLGSLPRGPGSWWTSTESLCSNASGDSRHSAYSYCGRGFYPQYGALETRGGFNPRVERTLLDARRRLEDQAAAPAGLGSLTPSAAGSTSSLVGVGLPPPTPRGSGLSTPVPPSAGHLAHVREQMAGALRKLRQLEEQVKLIPVLQVKLSVLQEEKRQLTVQLKSQKFLGHPAGARGRGELCLDLPEAPEDPVTLETRSVGTWVRERDLGMPDGEAALAAKVAVLETQLKKALQELQAAQARQADLPPQAWPPPDSPVRVDTVRVVQGPREVEVAASTAAGAPAQRAQSLEPYGAGLRALATSNGAESPPVFRSHEVMETVFPAPTASTSNVHQVKKISITERSCDGAAGHPQAPAESSLSPPESEGATQAQPEKNTGQVPAHDDTTIKEPIRQAACHESEFEEAGGAGGAQAGLRSIMKQKEEPTDPEAHRRSLQFVGVNGSISPRYESSSEDSSTAENFSDNESTENEAPEPEERVPSVAEAPQLRPKETAKAKTSREESQLPQESLHTPTAEGASGSSAKDEIRMELSPDLISACLALEKYLENPKALTERELKVAYTTVLQEWLRLACRSDAHPELVRRHLVTFRAMSARLLDYVVNIADSNGNTALHYSVSHANFPVVQQLLDSGVCQVDKQNRAGYSPIMLTALATLKTQDDIQTILQLFRLGDVNAKASQAGQTALMLAVSHGRVDVVKALLACEADVNVQDDDGSTALMCACEHGHKEITALLLAVPSCDISITDRDGSTALMVALDAGHSEIASMLYSRMNIKCSFAPMSDDESPASSSAEE</sequence>
<reference key="1">
    <citation type="submission" date="2006-05" db="EMBL/GenBank/DDBJ databases">
        <authorList>
            <consortium name="NIH - Mammalian Gene Collection (MGC) project"/>
        </authorList>
    </citation>
    <scope>NUCLEOTIDE SEQUENCE [LARGE SCALE MRNA]</scope>
    <source>
        <strain>Hereford</strain>
        <tissue>Heart ventricle</tissue>
    </source>
</reference>
<dbReference type="EMBL" id="BC115992">
    <property type="protein sequence ID" value="AAI15993.1"/>
    <property type="molecule type" value="mRNA"/>
</dbReference>
<dbReference type="RefSeq" id="NP_001069999.1">
    <property type="nucleotide sequence ID" value="NM_001076531.1"/>
</dbReference>
<dbReference type="RefSeq" id="XP_024850406.1">
    <property type="nucleotide sequence ID" value="XM_024994638.2"/>
</dbReference>
<dbReference type="RefSeq" id="XP_024850407.1">
    <property type="nucleotide sequence ID" value="XM_024994639.2"/>
</dbReference>
<dbReference type="SMR" id="Q1LZH7"/>
<dbReference type="FunCoup" id="Q1LZH7">
    <property type="interactions" value="1043"/>
</dbReference>
<dbReference type="STRING" id="9913.ENSBTAP00000012586"/>
<dbReference type="PaxDb" id="9913-ENSBTAP00000012586"/>
<dbReference type="Ensembl" id="ENSBTAT00000012586.6">
    <property type="protein sequence ID" value="ENSBTAP00000012586.5"/>
    <property type="gene ID" value="ENSBTAG00000009568.6"/>
</dbReference>
<dbReference type="GeneID" id="767586"/>
<dbReference type="KEGG" id="bta:767586"/>
<dbReference type="CTD" id="25959"/>
<dbReference type="VEuPathDB" id="HostDB:ENSBTAG00000009568"/>
<dbReference type="VGNC" id="VGNC:30390">
    <property type="gene designation" value="KANK2"/>
</dbReference>
<dbReference type="eggNOG" id="KOG0514">
    <property type="taxonomic scope" value="Eukaryota"/>
</dbReference>
<dbReference type="GeneTree" id="ENSGT00940000161012"/>
<dbReference type="InParanoid" id="Q1LZH7"/>
<dbReference type="OMA" id="DTVVQKC"/>
<dbReference type="OrthoDB" id="5406014at2759"/>
<dbReference type="Proteomes" id="UP000009136">
    <property type="component" value="Chromosome 7"/>
</dbReference>
<dbReference type="Bgee" id="ENSBTAG00000009568">
    <property type="expression patterns" value="Expressed in trachea and 106 other cell types or tissues"/>
</dbReference>
<dbReference type="GO" id="GO:0005737">
    <property type="term" value="C:cytoplasm"/>
    <property type="evidence" value="ECO:0000250"/>
    <property type="project" value="UniProtKB"/>
</dbReference>
<dbReference type="GO" id="GO:0005739">
    <property type="term" value="C:mitochondrion"/>
    <property type="evidence" value="ECO:0000250"/>
    <property type="project" value="UniProtKB"/>
</dbReference>
<dbReference type="GO" id="GO:0006915">
    <property type="term" value="P:apoptotic process"/>
    <property type="evidence" value="ECO:0007669"/>
    <property type="project" value="UniProtKB-KW"/>
</dbReference>
<dbReference type="GO" id="GO:0072073">
    <property type="term" value="P:kidney epithelium development"/>
    <property type="evidence" value="ECO:0000250"/>
    <property type="project" value="UniProtKB"/>
</dbReference>
<dbReference type="GO" id="GO:0030837">
    <property type="term" value="P:negative regulation of actin filament polymerization"/>
    <property type="evidence" value="ECO:0007669"/>
    <property type="project" value="InterPro"/>
</dbReference>
<dbReference type="GO" id="GO:0008285">
    <property type="term" value="P:negative regulation of cell population proliferation"/>
    <property type="evidence" value="ECO:0000250"/>
    <property type="project" value="UniProtKB"/>
</dbReference>
<dbReference type="GO" id="GO:2000134">
    <property type="term" value="P:negative regulation of G1/S transition of mitotic cell cycle"/>
    <property type="evidence" value="ECO:0000250"/>
    <property type="project" value="UniProtKB"/>
</dbReference>
<dbReference type="GO" id="GO:0033147">
    <property type="term" value="P:negative regulation of intracellular estrogen receptor signaling pathway"/>
    <property type="evidence" value="ECO:0000250"/>
    <property type="project" value="UniProtKB"/>
</dbReference>
<dbReference type="GO" id="GO:0043069">
    <property type="term" value="P:negative regulation of programmed cell death"/>
    <property type="evidence" value="ECO:0000250"/>
    <property type="project" value="UniProtKB"/>
</dbReference>
<dbReference type="GO" id="GO:0000122">
    <property type="term" value="P:negative regulation of transcription by RNA polymerase II"/>
    <property type="evidence" value="ECO:0000250"/>
    <property type="project" value="UniProtKB"/>
</dbReference>
<dbReference type="GO" id="GO:0070563">
    <property type="term" value="P:negative regulation of vitamin D receptor signaling pathway"/>
    <property type="evidence" value="ECO:0000250"/>
    <property type="project" value="UniProtKB"/>
</dbReference>
<dbReference type="GO" id="GO:0090521">
    <property type="term" value="P:podocyte cell migration"/>
    <property type="evidence" value="ECO:0000250"/>
    <property type="project" value="UniProtKB"/>
</dbReference>
<dbReference type="GO" id="GO:0035023">
    <property type="term" value="P:regulation of Rho protein signal transduction"/>
    <property type="evidence" value="ECO:0000250"/>
    <property type="project" value="UniProtKB"/>
</dbReference>
<dbReference type="FunFam" id="1.25.40.20:FF:000017">
    <property type="entry name" value="KN motif and ankyrin repeat domain-containing protein 1"/>
    <property type="match status" value="1"/>
</dbReference>
<dbReference type="Gene3D" id="1.25.40.20">
    <property type="entry name" value="Ankyrin repeat-containing domain"/>
    <property type="match status" value="1"/>
</dbReference>
<dbReference type="InterPro" id="IPR002110">
    <property type="entry name" value="Ankyrin_rpt"/>
</dbReference>
<dbReference type="InterPro" id="IPR036770">
    <property type="entry name" value="Ankyrin_rpt-contain_sf"/>
</dbReference>
<dbReference type="InterPro" id="IPR047184">
    <property type="entry name" value="KANK1-4"/>
</dbReference>
<dbReference type="InterPro" id="IPR021939">
    <property type="entry name" value="KN_motif"/>
</dbReference>
<dbReference type="PANTHER" id="PTHR24168">
    <property type="entry name" value="KN MOTIF AND ANKYRIN REPEAT DOMAIN-CONTAINING"/>
    <property type="match status" value="1"/>
</dbReference>
<dbReference type="PANTHER" id="PTHR24168:SF0">
    <property type="entry name" value="KN MOTIF AND ANKYRIN REPEAT DOMAIN-CONTAINING PROTEIN 2"/>
    <property type="match status" value="1"/>
</dbReference>
<dbReference type="Pfam" id="PF00023">
    <property type="entry name" value="Ank"/>
    <property type="match status" value="1"/>
</dbReference>
<dbReference type="Pfam" id="PF12796">
    <property type="entry name" value="Ank_2"/>
    <property type="match status" value="1"/>
</dbReference>
<dbReference type="Pfam" id="PF12075">
    <property type="entry name" value="KN_motif"/>
    <property type="match status" value="1"/>
</dbReference>
<dbReference type="SMART" id="SM00248">
    <property type="entry name" value="ANK"/>
    <property type="match status" value="5"/>
</dbReference>
<dbReference type="SUPFAM" id="SSF48403">
    <property type="entry name" value="Ankyrin repeat"/>
    <property type="match status" value="1"/>
</dbReference>
<dbReference type="PROSITE" id="PS50297">
    <property type="entry name" value="ANK_REP_REGION"/>
    <property type="match status" value="1"/>
</dbReference>
<dbReference type="PROSITE" id="PS50088">
    <property type="entry name" value="ANK_REPEAT"/>
    <property type="match status" value="2"/>
</dbReference>
<evidence type="ECO:0000250" key="1"/>
<evidence type="ECO:0000250" key="2">
    <source>
        <dbReference type="UniProtKB" id="Q63ZY3"/>
    </source>
</evidence>
<evidence type="ECO:0000250" key="3">
    <source>
        <dbReference type="UniProtKB" id="Q8BX02"/>
    </source>
</evidence>
<evidence type="ECO:0000255" key="4"/>
<evidence type="ECO:0000256" key="5">
    <source>
        <dbReference type="SAM" id="MobiDB-lite"/>
    </source>
</evidence>
<gene>
    <name type="primary">KANK2</name>
    <name type="synonym">ANKRD25</name>
</gene>
<name>KANK2_BOVIN</name>
<comment type="function">
    <text evidence="2 3">Involved in transcription regulation by sequestering in the cytoplasm nuclear receptor coactivators such as NCOA1, NCOA2 and NCOA3 (By similarity). Involved in regulation of caspase-independent apoptosis by sequestering the proapoptotic factor AIFM1 in mitochondria (By similarity). Pro-apoptotic stimuli can induce its proteasomal degradation allowing the translocation of AIFM1 to the nucleus to induce apoptosis (By similarity). Involved in the negative control of vitamin D receptor signaling pathway (By similarity). Involved in actin stress fibers formation through its interaction with ARHGDIA and the regulation of the Rho signaling pathway (By similarity). May thereby play a role in cell adhesion and migration, regulating for instance podocytes migration during development of the kidney (By similarity). Through the Rho signaling pathway may also regulate cell proliferation (By similarity).</text>
</comment>
<comment type="subunit">
    <text evidence="2">Interacts (non-phosphorylated form) with NCOA1; NCOA2 AND NCOA3 (By similarity). Interacts with AIFM1 (By similarity). Interacts with ARHGDIA; the interaction is direct and may regulate the interaction of ARHGDIA with RHOA, RAC1 and CDC42 (By similarity). Interacts (via ANK repeats 1-5) with KIF21A (By similarity).</text>
</comment>
<comment type="subcellular location">
    <subcellularLocation>
        <location evidence="2">Cytoplasm</location>
    </subcellularLocation>
    <subcellularLocation>
        <location evidence="2">Mitochondrion</location>
    </subcellularLocation>
</comment>
<comment type="PTM">
    <text evidence="2">Phosphorylated by casein kinase II upon estrogen stimulation (By similarity). Phosphorylation induces the release by KANK2 of NCOA1 and its translocation to the nucleus where NCOA1 can activate gene transcription (By similarity).</text>
</comment>
<feature type="chain" id="PRO_0000240839" description="KN motif and ankyrin repeat domain-containing protein 2">
    <location>
        <begin position="1"/>
        <end position="858"/>
    </location>
</feature>
<feature type="repeat" description="ANK 0; degenerate" evidence="2">
    <location>
        <begin position="621"/>
        <end position="658"/>
    </location>
</feature>
<feature type="repeat" description="ANK 1" evidence="4">
    <location>
        <begin position="673"/>
        <end position="703"/>
    </location>
</feature>
<feature type="repeat" description="ANK 2" evidence="4">
    <location>
        <begin position="707"/>
        <end position="740"/>
    </location>
</feature>
<feature type="repeat" description="ANK 3" evidence="4">
    <location>
        <begin position="745"/>
        <end position="774"/>
    </location>
</feature>
<feature type="repeat" description="ANK 4" evidence="4">
    <location>
        <begin position="778"/>
        <end position="808"/>
    </location>
</feature>
<feature type="repeat" description="ANK 5" evidence="4">
    <location>
        <begin position="812"/>
        <end position="842"/>
    </location>
</feature>
<feature type="region of interest" description="Interaction with AIFM1" evidence="1">
    <location>
        <begin position="1"/>
        <end position="72"/>
    </location>
</feature>
<feature type="region of interest" description="Disordered" evidence="5">
    <location>
        <begin position="1"/>
        <end position="29"/>
    </location>
</feature>
<feature type="region of interest" description="Disordered" evidence="5">
    <location>
        <begin position="140"/>
        <end position="182"/>
    </location>
</feature>
<feature type="region of interest" description="Disordered" evidence="5">
    <location>
        <begin position="412"/>
        <end position="451"/>
    </location>
</feature>
<feature type="region of interest" description="Disordered" evidence="5">
    <location>
        <begin position="488"/>
        <end position="590"/>
    </location>
</feature>
<feature type="region of interest" description="Interaction with NCOA1" evidence="1">
    <location>
        <begin position="676"/>
        <end position="842"/>
    </location>
</feature>
<feature type="coiled-coil region" evidence="4">
    <location>
        <begin position="183"/>
        <end position="234"/>
    </location>
</feature>
<feature type="coiled-coil region" evidence="4">
    <location>
        <begin position="282"/>
        <end position="313"/>
    </location>
</feature>
<feature type="compositionally biased region" description="Pro residues" evidence="5">
    <location>
        <begin position="12"/>
        <end position="23"/>
    </location>
</feature>
<feature type="compositionally biased region" description="Polar residues" evidence="5">
    <location>
        <begin position="148"/>
        <end position="159"/>
    </location>
</feature>
<feature type="compositionally biased region" description="Low complexity" evidence="5">
    <location>
        <begin position="421"/>
        <end position="435"/>
    </location>
</feature>
<feature type="compositionally biased region" description="Polar residues" evidence="5">
    <location>
        <begin position="436"/>
        <end position="446"/>
    </location>
</feature>
<feature type="compositionally biased region" description="Basic and acidic residues" evidence="5">
    <location>
        <begin position="488"/>
        <end position="499"/>
    </location>
</feature>
<feature type="compositionally biased region" description="Low complexity" evidence="5">
    <location>
        <begin position="509"/>
        <end position="528"/>
    </location>
</feature>
<feature type="compositionally biased region" description="Basic and acidic residues" evidence="5">
    <location>
        <begin position="555"/>
        <end position="569"/>
    </location>
</feature>
<feature type="modified residue" description="Phosphoserine" evidence="2">
    <location>
        <position position="19"/>
    </location>
</feature>
<feature type="modified residue" description="Phosphoserine" evidence="3">
    <location>
        <position position="83"/>
    </location>
</feature>
<feature type="modified residue" description="Phosphoserine" evidence="3">
    <location>
        <position position="86"/>
    </location>
</feature>
<feature type="modified residue" description="Phosphoserine" evidence="3">
    <location>
        <position position="89"/>
    </location>
</feature>
<feature type="modified residue" description="Phosphoserine" evidence="2">
    <location>
        <position position="92"/>
    </location>
</feature>
<feature type="modified residue" description="Omega-N-methylarginine" evidence="2">
    <location>
        <position position="105"/>
    </location>
</feature>
<feature type="modified residue" description="Phosphothreonine" evidence="3">
    <location>
        <position position="168"/>
    </location>
</feature>
<feature type="modified residue" description="Phosphoserine" evidence="2">
    <location>
        <position position="323"/>
    </location>
</feature>
<feature type="modified residue" description="Phosphothreonine" evidence="2">
    <location>
        <position position="329"/>
    </location>
</feature>
<feature type="modified residue" description="Phosphoserine" evidence="2">
    <location>
        <position position="356"/>
    </location>
</feature>
<feature type="modified residue" description="Phosphoserine" evidence="2">
    <location>
        <position position="375"/>
    </location>
</feature>
<feature type="modified residue" description="Phosphoserine" evidence="2">
    <location>
        <position position="547"/>
    </location>
</feature>
<feature type="modified residue" description="Phosphothreonine" evidence="2">
    <location>
        <position position="559"/>
    </location>
</feature>
<accession>Q1LZH7</accession>